<reference key="1">
    <citation type="journal article" date="2006" name="Nature">
        <title>The DNA sequence, annotation and analysis of human chromosome 3.</title>
        <authorList>
            <person name="Muzny D.M."/>
            <person name="Scherer S.E."/>
            <person name="Kaul R."/>
            <person name="Wang J."/>
            <person name="Yu J."/>
            <person name="Sudbrak R."/>
            <person name="Buhay C.J."/>
            <person name="Chen R."/>
            <person name="Cree A."/>
            <person name="Ding Y."/>
            <person name="Dugan-Rocha S."/>
            <person name="Gill R."/>
            <person name="Gunaratne P."/>
            <person name="Harris R.A."/>
            <person name="Hawes A.C."/>
            <person name="Hernandez J."/>
            <person name="Hodgson A.V."/>
            <person name="Hume J."/>
            <person name="Jackson A."/>
            <person name="Khan Z.M."/>
            <person name="Kovar-Smith C."/>
            <person name="Lewis L.R."/>
            <person name="Lozado R.J."/>
            <person name="Metzker M.L."/>
            <person name="Milosavljevic A."/>
            <person name="Miner G.R."/>
            <person name="Morgan M.B."/>
            <person name="Nazareth L.V."/>
            <person name="Scott G."/>
            <person name="Sodergren E."/>
            <person name="Song X.-Z."/>
            <person name="Steffen D."/>
            <person name="Wei S."/>
            <person name="Wheeler D.A."/>
            <person name="Wright M.W."/>
            <person name="Worley K.C."/>
            <person name="Yuan Y."/>
            <person name="Zhang Z."/>
            <person name="Adams C.Q."/>
            <person name="Ansari-Lari M.A."/>
            <person name="Ayele M."/>
            <person name="Brown M.J."/>
            <person name="Chen G."/>
            <person name="Chen Z."/>
            <person name="Clendenning J."/>
            <person name="Clerc-Blankenburg K.P."/>
            <person name="Chen R."/>
            <person name="Chen Z."/>
            <person name="Davis C."/>
            <person name="Delgado O."/>
            <person name="Dinh H.H."/>
            <person name="Dong W."/>
            <person name="Draper H."/>
            <person name="Ernst S."/>
            <person name="Fu G."/>
            <person name="Gonzalez-Garay M.L."/>
            <person name="Garcia D.K."/>
            <person name="Gillett W."/>
            <person name="Gu J."/>
            <person name="Hao B."/>
            <person name="Haugen E."/>
            <person name="Havlak P."/>
            <person name="He X."/>
            <person name="Hennig S."/>
            <person name="Hu S."/>
            <person name="Huang W."/>
            <person name="Jackson L.R."/>
            <person name="Jacob L.S."/>
            <person name="Kelly S.H."/>
            <person name="Kube M."/>
            <person name="Levy R."/>
            <person name="Li Z."/>
            <person name="Liu B."/>
            <person name="Liu J."/>
            <person name="Liu W."/>
            <person name="Lu J."/>
            <person name="Maheshwari M."/>
            <person name="Nguyen B.-V."/>
            <person name="Okwuonu G.O."/>
            <person name="Palmeiri A."/>
            <person name="Pasternak S."/>
            <person name="Perez L.M."/>
            <person name="Phelps K.A."/>
            <person name="Plopper F.J."/>
            <person name="Qiang B."/>
            <person name="Raymond C."/>
            <person name="Rodriguez R."/>
            <person name="Saenphimmachak C."/>
            <person name="Santibanez J."/>
            <person name="Shen H."/>
            <person name="Shen Y."/>
            <person name="Subramanian S."/>
            <person name="Tabor P.E."/>
            <person name="Verduzco D."/>
            <person name="Waldron L."/>
            <person name="Wang J."/>
            <person name="Wang J."/>
            <person name="Wang Q."/>
            <person name="Williams G.A."/>
            <person name="Wong G.K.-S."/>
            <person name="Yao Z."/>
            <person name="Zhang J."/>
            <person name="Zhang X."/>
            <person name="Zhao G."/>
            <person name="Zhou J."/>
            <person name="Zhou Y."/>
            <person name="Nelson D."/>
            <person name="Lehrach H."/>
            <person name="Reinhardt R."/>
            <person name="Naylor S.L."/>
            <person name="Yang H."/>
            <person name="Olson M."/>
            <person name="Weinstock G."/>
            <person name="Gibbs R.A."/>
        </authorList>
    </citation>
    <scope>NUCLEOTIDE SEQUENCE [LARGE SCALE GENOMIC DNA]</scope>
</reference>
<keyword id="KW-1185">Reference proteome</keyword>
<gene>
    <name evidence="3" type="primary">MINDY4B</name>
    <name type="synonym">C3orf76</name>
    <name type="synonym">FAM188B2</name>
</gene>
<sequence>MDMEVLGQEQSSEQLDLEEISRKISFLDKWREIFSYHRLGTNNSTPQNHEGNHTSADENEDGTGLSQPKGQGHLPSSGLCSIPNPSIISSKLGGFPISLAMATKLRQILFGNTVHVFSYNWKKAYFRFHDPSSELAFTLEVGKGGARSIQMAVQGSIIKYLLFTRKGKDCNLGNLCEISKKEQEQALAAALAGILWAAGAAQKATICLVTEDIYVASTPDYSVDNFTERLQLFEFLEKEAAEKFIYDHLLCFRGEGSHGVILFLYSLIFSRTFERLQMDLDVTTTQLLQPNAGGFLCRQAVLNMILTGRASPNVFNGCEEGKSQETLHGVLTRSDVGYLQWGKDASEDDRLSQVGSMLKTPKLPIWLCNINGNYSILFCTNRQLLSDWKMERLFDLYFYSGQPSQKKLVRLTIDTHSHHWERDQQEEKHGPRRRFSPVEMAIRTKWSEATINWNGTVPFF</sequence>
<proteinExistence type="inferred from homology"/>
<feature type="chain" id="PRO_0000343573" description="Inactive ubiquitin carboxyl-terminal hydrolase MINDY-4B">
    <location>
        <begin position="1"/>
        <end position="460"/>
    </location>
</feature>
<feature type="region of interest" description="Disordered" evidence="1">
    <location>
        <begin position="41"/>
        <end position="76"/>
    </location>
</feature>
<dbReference type="EMBL" id="AC016142">
    <property type="status" value="NOT_ANNOTATED_CDS"/>
    <property type="molecule type" value="Genomic_DNA"/>
</dbReference>
<dbReference type="EMBL" id="AC020636">
    <property type="status" value="NOT_ANNOTATED_CDS"/>
    <property type="molecule type" value="Genomic_DNA"/>
</dbReference>
<dbReference type="EMBL" id="AC108674">
    <property type="status" value="NOT_ANNOTATED_CDS"/>
    <property type="molecule type" value="Genomic_DNA"/>
</dbReference>
<dbReference type="CCDS" id="CCDS93407.1"/>
<dbReference type="RefSeq" id="NP_001338210.2">
    <property type="nucleotide sequence ID" value="NM_001351281.2"/>
</dbReference>
<dbReference type="FunCoup" id="A8MYZ0">
    <property type="interactions" value="2"/>
</dbReference>
<dbReference type="STRING" id="9606.ENSP00000491923"/>
<dbReference type="iPTMnet" id="A8MYZ0"/>
<dbReference type="PhosphoSitePlus" id="A8MYZ0"/>
<dbReference type="BioMuta" id="MINDY4B"/>
<dbReference type="PeptideAtlas" id="A8MYZ0"/>
<dbReference type="Antibodypedia" id="56512">
    <property type="antibodies" value="7 antibodies from 4 providers"/>
</dbReference>
<dbReference type="Ensembl" id="ENST00000465419.7">
    <property type="protein sequence ID" value="ENSP00000491923.1"/>
    <property type="gene ID" value="ENSG00000214237.11"/>
</dbReference>
<dbReference type="GeneID" id="646951"/>
<dbReference type="MANE-Select" id="ENST00000465419.7">
    <property type="protein sequence ID" value="ENSP00000491923.1"/>
    <property type="RefSeq nucleotide sequence ID" value="NM_001351281.2"/>
    <property type="RefSeq protein sequence ID" value="NP_001338210.2"/>
</dbReference>
<dbReference type="AGR" id="HGNC:35475"/>
<dbReference type="GeneCards" id="MINDY4B"/>
<dbReference type="HGNC" id="HGNC:35475">
    <property type="gene designation" value="MINDY4B"/>
</dbReference>
<dbReference type="HPA" id="ENSG00000214237">
    <property type="expression patterns" value="Tissue enhanced (brain)"/>
</dbReference>
<dbReference type="neXtProt" id="NX_A8MYZ0"/>
<dbReference type="OpenTargets" id="ENSG00000214237"/>
<dbReference type="PharmGKB" id="PA165697258"/>
<dbReference type="VEuPathDB" id="HostDB:ENSG00000214237"/>
<dbReference type="GeneTree" id="ENSGT00940000162644"/>
<dbReference type="InParanoid" id="A8MYZ0"/>
<dbReference type="OMA" id="DHLQCFK"/>
<dbReference type="OrthoDB" id="10263628at2759"/>
<dbReference type="PAN-GO" id="A8MYZ0">
    <property type="GO annotations" value="1 GO annotation based on evolutionary models"/>
</dbReference>
<dbReference type="PhylomeDB" id="A8MYZ0"/>
<dbReference type="Pharos" id="A8MYZ0">
    <property type="development level" value="Tdark"/>
</dbReference>
<dbReference type="PRO" id="PR:A8MYZ0"/>
<dbReference type="Proteomes" id="UP000005640">
    <property type="component" value="Chromosome 3"/>
</dbReference>
<dbReference type="RNAct" id="A8MYZ0">
    <property type="molecule type" value="protein"/>
</dbReference>
<dbReference type="Bgee" id="ENSG00000214237">
    <property type="expression patterns" value="Expressed in male germ line stem cell (sensu Vertebrata) in testis and 49 other cell types or tissues"/>
</dbReference>
<dbReference type="GO" id="GO:0004843">
    <property type="term" value="F:cysteine-type deubiquitinase activity"/>
    <property type="evidence" value="ECO:0007669"/>
    <property type="project" value="InterPro"/>
</dbReference>
<dbReference type="GO" id="GO:1990380">
    <property type="term" value="F:K48-linked deubiquitinase activity"/>
    <property type="evidence" value="ECO:0000318"/>
    <property type="project" value="GO_Central"/>
</dbReference>
<dbReference type="GO" id="GO:0071108">
    <property type="term" value="P:protein K48-linked deubiquitination"/>
    <property type="evidence" value="ECO:0007669"/>
    <property type="project" value="InterPro"/>
</dbReference>
<dbReference type="InterPro" id="IPR025257">
    <property type="entry name" value="MINDY-3/4_CD"/>
</dbReference>
<dbReference type="InterPro" id="IPR039785">
    <property type="entry name" value="MINY3/4"/>
</dbReference>
<dbReference type="PANTHER" id="PTHR12473:SF18">
    <property type="entry name" value="INACTIVE UBIQUITIN CARBOXYL-TERMINAL HYDROLASE MINDY-4B"/>
    <property type="match status" value="1"/>
</dbReference>
<dbReference type="PANTHER" id="PTHR12473">
    <property type="entry name" value="UBIQUITIN CARBOXYL-TERMINAL HYDROLASE MINDY-4-RELATED"/>
    <property type="match status" value="1"/>
</dbReference>
<dbReference type="Pfam" id="PF13898">
    <property type="entry name" value="MINDY-3_4_CD"/>
    <property type="match status" value="1"/>
</dbReference>
<dbReference type="SMART" id="SM01174">
    <property type="entry name" value="DUF4205"/>
    <property type="match status" value="1"/>
</dbReference>
<protein>
    <recommendedName>
        <fullName>Inactive ubiquitin carboxyl-terminal hydrolase MINDY-4B</fullName>
    </recommendedName>
    <alternativeName>
        <fullName>Protein FAM188B2</fullName>
    </alternativeName>
</protein>
<comment type="similarity">
    <text evidence="2">Belongs to the MINDY deubiquitinase family. FAM188 subfamily.</text>
</comment>
<comment type="caution">
    <text evidence="2">In contrast to other members of the MINDY family, lacks the conserved active sites required for deubiquitination.</text>
</comment>
<name>MIY4B_HUMAN</name>
<accession>A8MYZ0</accession>
<accession>A0A1W2PQ44</accession>
<organism>
    <name type="scientific">Homo sapiens</name>
    <name type="common">Human</name>
    <dbReference type="NCBI Taxonomy" id="9606"/>
    <lineage>
        <taxon>Eukaryota</taxon>
        <taxon>Metazoa</taxon>
        <taxon>Chordata</taxon>
        <taxon>Craniata</taxon>
        <taxon>Vertebrata</taxon>
        <taxon>Euteleostomi</taxon>
        <taxon>Mammalia</taxon>
        <taxon>Eutheria</taxon>
        <taxon>Euarchontoglires</taxon>
        <taxon>Primates</taxon>
        <taxon>Haplorrhini</taxon>
        <taxon>Catarrhini</taxon>
        <taxon>Hominidae</taxon>
        <taxon>Homo</taxon>
    </lineage>
</organism>
<evidence type="ECO:0000256" key="1">
    <source>
        <dbReference type="SAM" id="MobiDB-lite"/>
    </source>
</evidence>
<evidence type="ECO:0000305" key="2"/>
<evidence type="ECO:0000312" key="3">
    <source>
        <dbReference type="HGNC" id="HGNC:35475"/>
    </source>
</evidence>